<gene>
    <name evidence="1" type="primary">dut</name>
    <name type="ordered locus">ABBFA_002728</name>
</gene>
<comment type="function">
    <text evidence="1">This enzyme is involved in nucleotide metabolism: it produces dUMP, the immediate precursor of thymidine nucleotides and it decreases the intracellular concentration of dUTP so that uracil cannot be incorporated into DNA.</text>
</comment>
<comment type="catalytic activity">
    <reaction evidence="1">
        <text>dUTP + H2O = dUMP + diphosphate + H(+)</text>
        <dbReference type="Rhea" id="RHEA:10248"/>
        <dbReference type="ChEBI" id="CHEBI:15377"/>
        <dbReference type="ChEBI" id="CHEBI:15378"/>
        <dbReference type="ChEBI" id="CHEBI:33019"/>
        <dbReference type="ChEBI" id="CHEBI:61555"/>
        <dbReference type="ChEBI" id="CHEBI:246422"/>
        <dbReference type="EC" id="3.6.1.23"/>
    </reaction>
</comment>
<comment type="cofactor">
    <cofactor evidence="1">
        <name>Mg(2+)</name>
        <dbReference type="ChEBI" id="CHEBI:18420"/>
    </cofactor>
</comment>
<comment type="pathway">
    <text evidence="1">Pyrimidine metabolism; dUMP biosynthesis; dUMP from dCTP (dUTP route): step 2/2.</text>
</comment>
<comment type="similarity">
    <text evidence="1">Belongs to the dUTPase family.</text>
</comment>
<feature type="chain" id="PRO_1000117561" description="Deoxyuridine 5'-triphosphate nucleotidohydrolase">
    <location>
        <begin position="1"/>
        <end position="150"/>
    </location>
</feature>
<feature type="binding site" evidence="1">
    <location>
        <begin position="69"/>
        <end position="71"/>
    </location>
    <ligand>
        <name>substrate</name>
    </ligand>
</feature>
<feature type="binding site" evidence="1">
    <location>
        <position position="82"/>
    </location>
    <ligand>
        <name>substrate</name>
    </ligand>
</feature>
<feature type="binding site" evidence="1">
    <location>
        <begin position="86"/>
        <end position="88"/>
    </location>
    <ligand>
        <name>substrate</name>
    </ligand>
</feature>
<feature type="binding site" evidence="1">
    <location>
        <position position="96"/>
    </location>
    <ligand>
        <name>substrate</name>
    </ligand>
</feature>
<keyword id="KW-0378">Hydrolase</keyword>
<keyword id="KW-0460">Magnesium</keyword>
<keyword id="KW-0479">Metal-binding</keyword>
<keyword id="KW-0546">Nucleotide metabolism</keyword>
<protein>
    <recommendedName>
        <fullName evidence="1">Deoxyuridine 5'-triphosphate nucleotidohydrolase</fullName>
        <shortName evidence="1">dUTPase</shortName>
        <ecNumber evidence="1">3.6.1.23</ecNumber>
    </recommendedName>
    <alternativeName>
        <fullName evidence="1">dUTP pyrophosphatase</fullName>
    </alternativeName>
</protein>
<organism>
    <name type="scientific">Acinetobacter baumannii (strain AB307-0294)</name>
    <dbReference type="NCBI Taxonomy" id="557600"/>
    <lineage>
        <taxon>Bacteria</taxon>
        <taxon>Pseudomonadati</taxon>
        <taxon>Pseudomonadota</taxon>
        <taxon>Gammaproteobacteria</taxon>
        <taxon>Moraxellales</taxon>
        <taxon>Moraxellaceae</taxon>
        <taxon>Acinetobacter</taxon>
        <taxon>Acinetobacter calcoaceticus/baumannii complex</taxon>
    </lineage>
</organism>
<evidence type="ECO:0000255" key="1">
    <source>
        <dbReference type="HAMAP-Rule" id="MF_00116"/>
    </source>
</evidence>
<name>DUT_ACIB3</name>
<accession>B7GYK9</accession>
<reference key="1">
    <citation type="journal article" date="2008" name="J. Bacteriol.">
        <title>Comparative genome sequence analysis of multidrug-resistant Acinetobacter baumannii.</title>
        <authorList>
            <person name="Adams M.D."/>
            <person name="Goglin K."/>
            <person name="Molyneaux N."/>
            <person name="Hujer K.M."/>
            <person name="Lavender H."/>
            <person name="Jamison J.J."/>
            <person name="MacDonald I.J."/>
            <person name="Martin K.M."/>
            <person name="Russo T."/>
            <person name="Campagnari A.A."/>
            <person name="Hujer A.M."/>
            <person name="Bonomo R.A."/>
            <person name="Gill S.R."/>
        </authorList>
    </citation>
    <scope>NUCLEOTIDE SEQUENCE [LARGE SCALE GENOMIC DNA]</scope>
    <source>
        <strain>AB307-0294</strain>
    </source>
</reference>
<proteinExistence type="inferred from homology"/>
<dbReference type="EC" id="3.6.1.23" evidence="1"/>
<dbReference type="EMBL" id="CP001172">
    <property type="protein sequence ID" value="ACJ57454.1"/>
    <property type="molecule type" value="Genomic_DNA"/>
</dbReference>
<dbReference type="RefSeq" id="WP_000868152.1">
    <property type="nucleotide sequence ID" value="NZ_CP001172.1"/>
</dbReference>
<dbReference type="SMR" id="B7GYK9"/>
<dbReference type="GeneID" id="92892815"/>
<dbReference type="HOGENOM" id="CLU_068508_1_1_6"/>
<dbReference type="UniPathway" id="UPA00610">
    <property type="reaction ID" value="UER00666"/>
</dbReference>
<dbReference type="Proteomes" id="UP000006924">
    <property type="component" value="Chromosome"/>
</dbReference>
<dbReference type="GO" id="GO:0004170">
    <property type="term" value="F:dUTP diphosphatase activity"/>
    <property type="evidence" value="ECO:0007669"/>
    <property type="project" value="UniProtKB-UniRule"/>
</dbReference>
<dbReference type="GO" id="GO:0000287">
    <property type="term" value="F:magnesium ion binding"/>
    <property type="evidence" value="ECO:0007669"/>
    <property type="project" value="UniProtKB-UniRule"/>
</dbReference>
<dbReference type="GO" id="GO:0006226">
    <property type="term" value="P:dUMP biosynthetic process"/>
    <property type="evidence" value="ECO:0007669"/>
    <property type="project" value="UniProtKB-UniRule"/>
</dbReference>
<dbReference type="GO" id="GO:0046081">
    <property type="term" value="P:dUTP catabolic process"/>
    <property type="evidence" value="ECO:0007669"/>
    <property type="project" value="InterPro"/>
</dbReference>
<dbReference type="CDD" id="cd07557">
    <property type="entry name" value="trimeric_dUTPase"/>
    <property type="match status" value="1"/>
</dbReference>
<dbReference type="FunFam" id="2.70.40.10:FF:000002">
    <property type="entry name" value="dUTP diphosphatase"/>
    <property type="match status" value="1"/>
</dbReference>
<dbReference type="Gene3D" id="2.70.40.10">
    <property type="match status" value="1"/>
</dbReference>
<dbReference type="HAMAP" id="MF_00116">
    <property type="entry name" value="dUTPase_bact"/>
    <property type="match status" value="1"/>
</dbReference>
<dbReference type="InterPro" id="IPR008181">
    <property type="entry name" value="dUTPase"/>
</dbReference>
<dbReference type="InterPro" id="IPR029054">
    <property type="entry name" value="dUTPase-like"/>
</dbReference>
<dbReference type="InterPro" id="IPR036157">
    <property type="entry name" value="dUTPase-like_sf"/>
</dbReference>
<dbReference type="InterPro" id="IPR033704">
    <property type="entry name" value="dUTPase_trimeric"/>
</dbReference>
<dbReference type="NCBIfam" id="TIGR00576">
    <property type="entry name" value="dut"/>
    <property type="match status" value="1"/>
</dbReference>
<dbReference type="NCBIfam" id="NF001862">
    <property type="entry name" value="PRK00601.1"/>
    <property type="match status" value="1"/>
</dbReference>
<dbReference type="PANTHER" id="PTHR11241">
    <property type="entry name" value="DEOXYURIDINE 5'-TRIPHOSPHATE NUCLEOTIDOHYDROLASE"/>
    <property type="match status" value="1"/>
</dbReference>
<dbReference type="PANTHER" id="PTHR11241:SF0">
    <property type="entry name" value="DEOXYURIDINE 5'-TRIPHOSPHATE NUCLEOTIDOHYDROLASE"/>
    <property type="match status" value="1"/>
</dbReference>
<dbReference type="Pfam" id="PF00692">
    <property type="entry name" value="dUTPase"/>
    <property type="match status" value="1"/>
</dbReference>
<dbReference type="SUPFAM" id="SSF51283">
    <property type="entry name" value="dUTPase-like"/>
    <property type="match status" value="1"/>
</dbReference>
<sequence length="150" mass="16371">MKVQVKLLDPRLGKEWPLPSYATAGSAGLDLRACLDEAIEIEPGQTVLVKTGMAIYIHDVNFAGLILPRSGLGHKHGIVLGNLVGLIDSDYQGELMVSVWNRGQTTFRLEPGERLAQYVLVPVVQAEFEQVEEFEETLRGAGGFGHTGKQ</sequence>